<comment type="function">
    <text evidence="1">Participates actively in the response to hyperosmotic and heat shock by preventing the aggregation of stress-denatured proteins, in association with DnaK and GrpE. It is the nucleotide exchange factor for DnaK and may function as a thermosensor. Unfolded proteins bind initially to DnaJ; upon interaction with the DnaJ-bound protein, DnaK hydrolyzes its bound ATP, resulting in the formation of a stable complex. GrpE releases ADP from DnaK; ATP binding to DnaK triggers the release of the substrate protein, thus completing the reaction cycle. Several rounds of ATP-dependent interactions between DnaJ, DnaK and GrpE are required for fully efficient folding.</text>
</comment>
<comment type="subunit">
    <text evidence="1">Homodimer.</text>
</comment>
<comment type="subcellular location">
    <subcellularLocation>
        <location evidence="1">Cytoplasm</location>
    </subcellularLocation>
</comment>
<comment type="similarity">
    <text evidence="1">Belongs to the GrpE family.</text>
</comment>
<gene>
    <name evidence="1" type="primary">grpE</name>
    <name type="ordered locus">WRi_007690</name>
</gene>
<reference key="1">
    <citation type="journal article" date="2009" name="Proc. Natl. Acad. Sci. U.S.A.">
        <title>The mosaic genome structure of the Wolbachia wRi strain infecting Drosophila simulans.</title>
        <authorList>
            <person name="Klasson L."/>
            <person name="Westberg J."/>
            <person name="Sapountzis P."/>
            <person name="Naeslund K."/>
            <person name="Lutnaes Y."/>
            <person name="Darby A.C."/>
            <person name="Veneti Z."/>
            <person name="Chen L."/>
            <person name="Braig H.R."/>
            <person name="Garrett R."/>
            <person name="Bourtzis K."/>
            <person name="Andersson S.G."/>
        </authorList>
    </citation>
    <scope>NUCLEOTIDE SEQUENCE [LARGE SCALE GENOMIC DNA]</scope>
    <source>
        <strain>wRi</strain>
    </source>
</reference>
<evidence type="ECO:0000255" key="1">
    <source>
        <dbReference type="HAMAP-Rule" id="MF_01151"/>
    </source>
</evidence>
<evidence type="ECO:0000256" key="2">
    <source>
        <dbReference type="SAM" id="MobiDB-lite"/>
    </source>
</evidence>
<organism>
    <name type="scientific">Wolbachia sp. subsp. Drosophila simulans (strain wRi)</name>
    <dbReference type="NCBI Taxonomy" id="66084"/>
    <lineage>
        <taxon>Bacteria</taxon>
        <taxon>Pseudomonadati</taxon>
        <taxon>Pseudomonadota</taxon>
        <taxon>Alphaproteobacteria</taxon>
        <taxon>Rickettsiales</taxon>
        <taxon>Anaplasmataceae</taxon>
        <taxon>Wolbachieae</taxon>
        <taxon>Wolbachia</taxon>
    </lineage>
</organism>
<keyword id="KW-0143">Chaperone</keyword>
<keyword id="KW-0963">Cytoplasm</keyword>
<keyword id="KW-0346">Stress response</keyword>
<proteinExistence type="inferred from homology"/>
<protein>
    <recommendedName>
        <fullName evidence="1">Protein GrpE</fullName>
    </recommendedName>
    <alternativeName>
        <fullName evidence="1">HSP-70 cofactor</fullName>
    </alternativeName>
</protein>
<dbReference type="EMBL" id="CP001391">
    <property type="protein sequence ID" value="ACN95517.1"/>
    <property type="molecule type" value="Genomic_DNA"/>
</dbReference>
<dbReference type="RefSeq" id="WP_012673267.1">
    <property type="nucleotide sequence ID" value="NZ_MKIF01000038.1"/>
</dbReference>
<dbReference type="SMR" id="C0R3M5"/>
<dbReference type="STRING" id="66084.WRi_007690"/>
<dbReference type="KEGG" id="wri:WRi_007690"/>
<dbReference type="HOGENOM" id="CLU_057217_6_2_5"/>
<dbReference type="Proteomes" id="UP000001293">
    <property type="component" value="Chromosome"/>
</dbReference>
<dbReference type="GO" id="GO:0005737">
    <property type="term" value="C:cytoplasm"/>
    <property type="evidence" value="ECO:0007669"/>
    <property type="project" value="UniProtKB-SubCell"/>
</dbReference>
<dbReference type="GO" id="GO:0000774">
    <property type="term" value="F:adenyl-nucleotide exchange factor activity"/>
    <property type="evidence" value="ECO:0007669"/>
    <property type="project" value="InterPro"/>
</dbReference>
<dbReference type="GO" id="GO:0042803">
    <property type="term" value="F:protein homodimerization activity"/>
    <property type="evidence" value="ECO:0007669"/>
    <property type="project" value="InterPro"/>
</dbReference>
<dbReference type="GO" id="GO:0051087">
    <property type="term" value="F:protein-folding chaperone binding"/>
    <property type="evidence" value="ECO:0007669"/>
    <property type="project" value="InterPro"/>
</dbReference>
<dbReference type="GO" id="GO:0051082">
    <property type="term" value="F:unfolded protein binding"/>
    <property type="evidence" value="ECO:0007669"/>
    <property type="project" value="TreeGrafter"/>
</dbReference>
<dbReference type="GO" id="GO:0006457">
    <property type="term" value="P:protein folding"/>
    <property type="evidence" value="ECO:0007669"/>
    <property type="project" value="InterPro"/>
</dbReference>
<dbReference type="CDD" id="cd00446">
    <property type="entry name" value="GrpE"/>
    <property type="match status" value="1"/>
</dbReference>
<dbReference type="FunFam" id="2.30.22.10:FF:000001">
    <property type="entry name" value="Protein GrpE"/>
    <property type="match status" value="1"/>
</dbReference>
<dbReference type="Gene3D" id="3.90.20.20">
    <property type="match status" value="1"/>
</dbReference>
<dbReference type="Gene3D" id="2.30.22.10">
    <property type="entry name" value="Head domain of nucleotide exchange factor GrpE"/>
    <property type="match status" value="1"/>
</dbReference>
<dbReference type="HAMAP" id="MF_01151">
    <property type="entry name" value="GrpE"/>
    <property type="match status" value="1"/>
</dbReference>
<dbReference type="InterPro" id="IPR000740">
    <property type="entry name" value="GrpE"/>
</dbReference>
<dbReference type="InterPro" id="IPR013805">
    <property type="entry name" value="GrpE_coiled_coil"/>
</dbReference>
<dbReference type="InterPro" id="IPR009012">
    <property type="entry name" value="GrpE_head"/>
</dbReference>
<dbReference type="PANTHER" id="PTHR21237">
    <property type="entry name" value="GRPE PROTEIN"/>
    <property type="match status" value="1"/>
</dbReference>
<dbReference type="PANTHER" id="PTHR21237:SF23">
    <property type="entry name" value="GRPE PROTEIN HOMOLOG, MITOCHONDRIAL"/>
    <property type="match status" value="1"/>
</dbReference>
<dbReference type="Pfam" id="PF01025">
    <property type="entry name" value="GrpE"/>
    <property type="match status" value="1"/>
</dbReference>
<dbReference type="PRINTS" id="PR00773">
    <property type="entry name" value="GRPEPROTEIN"/>
</dbReference>
<dbReference type="SUPFAM" id="SSF58014">
    <property type="entry name" value="Coiled-coil domain of nucleotide exchange factor GrpE"/>
    <property type="match status" value="1"/>
</dbReference>
<dbReference type="SUPFAM" id="SSF51064">
    <property type="entry name" value="Head domain of nucleotide exchange factor GrpE"/>
    <property type="match status" value="1"/>
</dbReference>
<dbReference type="PROSITE" id="PS01071">
    <property type="entry name" value="GRPE"/>
    <property type="match status" value="1"/>
</dbReference>
<accession>C0R3M5</accession>
<sequence length="189" mass="21461">MSDSSKEKKKKFADMVSRQKGDDQQSDNHKQTDDLNEDLNTLKERAVQLEDHLRRAVADNENVKRIMQKQISDASDYAVTKLARDMIDSCDNLKRVMEILKDGDPVHEGIKVAYQKIINDLKKHGIEEVDPLGELFDSNLHQAVVEREDNEKKPGTIVEVLQTGYTIKNRLLRPAMVILSKKSADCGSD</sequence>
<feature type="chain" id="PRO_1000164231" description="Protein GrpE">
    <location>
        <begin position="1"/>
        <end position="189"/>
    </location>
</feature>
<feature type="region of interest" description="Disordered" evidence="2">
    <location>
        <begin position="1"/>
        <end position="37"/>
    </location>
</feature>
<feature type="compositionally biased region" description="Basic and acidic residues" evidence="2">
    <location>
        <begin position="17"/>
        <end position="33"/>
    </location>
</feature>
<name>GRPE_WOLWR</name>